<organism>
    <name type="scientific">Escherichia coli (strain K12)</name>
    <dbReference type="NCBI Taxonomy" id="83333"/>
    <lineage>
        <taxon>Bacteria</taxon>
        <taxon>Pseudomonadati</taxon>
        <taxon>Pseudomonadota</taxon>
        <taxon>Gammaproteobacteria</taxon>
        <taxon>Enterobacterales</taxon>
        <taxon>Enterobacteriaceae</taxon>
        <taxon>Escherichia</taxon>
    </lineage>
</organism>
<accession>P64423</accession>
<accession>P76054</accession>
<accession>Q2MBF0</accession>
<sequence length="327" mass="36612">MEAIKGSDVNVPDAVFAWMLDGRGGVKPLENTDVIDEAHPCWLHLNYVHHDSAQWLATTPLLPNNVRDALAGESTRPRVSRLGEGTLITLRCINGSTDERPDQLVAMRVYMDGRLIVSTRQRKVLALDDVVSDLEEGTGPTDCGGWLVDVCDALTDHSSEFIEQLHDKIIDLEDNLLDQQIPPRGFLALLRKQLIVMRRYMAPQRDVYARLASERLPWMSDDQRRRMQDIADRLGRGLDEIDACIARTGVMADEIAQVMQENLARRTYTMSLMAMVFLPSTFLTGLFGVNLGGIPGGGWQFGFSIFCILLVVLIGGVALWLHRSKWL</sequence>
<name>ZNTB_ECOLI</name>
<keyword id="KW-0002">3D-structure</keyword>
<keyword id="KW-0997">Cell inner membrane</keyword>
<keyword id="KW-1003">Cell membrane</keyword>
<keyword id="KW-0406">Ion transport</keyword>
<keyword id="KW-0472">Membrane</keyword>
<keyword id="KW-1185">Reference proteome</keyword>
<keyword id="KW-0812">Transmembrane</keyword>
<keyword id="KW-1133">Transmembrane helix</keyword>
<keyword id="KW-0813">Transport</keyword>
<keyword id="KW-0862">Zinc</keyword>
<evidence type="ECO:0000255" key="1">
    <source>
        <dbReference type="HAMAP-Rule" id="MF_01565"/>
    </source>
</evidence>
<evidence type="ECO:0000269" key="2">
    <source>
    </source>
</evidence>
<evidence type="ECO:0000269" key="3">
    <source>
    </source>
</evidence>
<evidence type="ECO:0000303" key="4">
    <source>
    </source>
</evidence>
<evidence type="ECO:0000305" key="5"/>
<evidence type="ECO:0000305" key="6">
    <source>
    </source>
</evidence>
<evidence type="ECO:0007744" key="7">
    <source>
        <dbReference type="PDB" id="5N9Y"/>
    </source>
</evidence>
<reference key="1">
    <citation type="journal article" date="1997" name="Science">
        <title>The complete genome sequence of Escherichia coli K-12.</title>
        <authorList>
            <person name="Blattner F.R."/>
            <person name="Plunkett G. III"/>
            <person name="Bloch C.A."/>
            <person name="Perna N.T."/>
            <person name="Burland V."/>
            <person name="Riley M."/>
            <person name="Collado-Vides J."/>
            <person name="Glasner J.D."/>
            <person name="Rode C.K."/>
            <person name="Mayhew G.F."/>
            <person name="Gregor J."/>
            <person name="Davis N.W."/>
            <person name="Kirkpatrick H.A."/>
            <person name="Goeden M.A."/>
            <person name="Rose D.J."/>
            <person name="Mau B."/>
            <person name="Shao Y."/>
        </authorList>
    </citation>
    <scope>NUCLEOTIDE SEQUENCE [LARGE SCALE GENOMIC DNA]</scope>
    <source>
        <strain>K12 / MG1655 / ATCC 47076</strain>
    </source>
</reference>
<reference key="2">
    <citation type="journal article" date="2006" name="Mol. Syst. Biol.">
        <title>Highly accurate genome sequences of Escherichia coli K-12 strains MG1655 and W3110.</title>
        <authorList>
            <person name="Hayashi K."/>
            <person name="Morooka N."/>
            <person name="Yamamoto Y."/>
            <person name="Fujita K."/>
            <person name="Isono K."/>
            <person name="Choi S."/>
            <person name="Ohtsubo E."/>
            <person name="Baba T."/>
            <person name="Wanner B.L."/>
            <person name="Mori H."/>
            <person name="Horiuchi T."/>
        </authorList>
    </citation>
    <scope>NUCLEOTIDE SEQUENCE [LARGE SCALE GENOMIC DNA]</scope>
    <source>
        <strain>K12 / W3110 / ATCC 27325 / DSM 5911</strain>
    </source>
</reference>
<reference key="3">
    <citation type="journal article" date="2005" name="Science">
        <title>Global topology analysis of the Escherichia coli inner membrane proteome.</title>
        <authorList>
            <person name="Daley D.O."/>
            <person name="Rapp M."/>
            <person name="Granseth E."/>
            <person name="Melen K."/>
            <person name="Drew D."/>
            <person name="von Heijne G."/>
        </authorList>
    </citation>
    <scope>TOPOLOGY [LARGE SCALE ANALYSIS]</scope>
    <scope>SUBCELLULAR LOCATION</scope>
    <source>
        <strain>K12 / MG1655 / ATCC 47076</strain>
    </source>
</reference>
<reference evidence="7" key="4">
    <citation type="journal article" date="2017" name="Nat. Commun.">
        <title>The structural basis of proton driven zinc transport by ZntB.</title>
        <authorList>
            <person name="Gati C."/>
            <person name="Stetsenko A."/>
            <person name="Slotboom D.J."/>
            <person name="Scheres S.H.W."/>
            <person name="Guskov A."/>
        </authorList>
    </citation>
    <scope>STRUCTURE BY ELECTRON MICROSCOPY (4.20 ANGSTROMS)</scope>
    <scope>FUNCTION</scope>
    <scope>CATALYTIC ACTIVITY</scope>
    <scope>SUBUNIT</scope>
    <scope>SUBCELLULAR LOCATION</scope>
    <scope>TOPOLOGY</scope>
</reference>
<gene>
    <name evidence="1 4" type="primary">zntB</name>
    <name type="synonym">ydaN</name>
    <name type="ordered locus">b1342</name>
    <name type="ordered locus">JW1336</name>
</gene>
<comment type="function">
    <text evidence="3">Zinc transporter (PubMed:29101379). Acts as a Zn(2+):proton symporter, which likely mediates zinc ion uptake (PubMed:29101379). Purified ZntB reconstituted in liposomes also binds and transports Cd(2+), Ni(2+) and Co(2+) (PubMed:29101379).</text>
</comment>
<comment type="catalytic activity">
    <reaction evidence="1 3">
        <text>Zn(2+)(out) + H(+)(out) = Zn(2+)(in) + H(+)(in)</text>
        <dbReference type="Rhea" id="RHEA:71195"/>
        <dbReference type="ChEBI" id="CHEBI:15378"/>
        <dbReference type="ChEBI" id="CHEBI:29105"/>
    </reaction>
    <physiologicalReaction direction="left-to-right" evidence="1 6">
        <dbReference type="Rhea" id="RHEA:71196"/>
    </physiologicalReaction>
</comment>
<comment type="subunit">
    <text evidence="3">Homopentamer.</text>
</comment>
<comment type="interaction">
    <interactant intactId="EBI-553267">
        <id>P64423</id>
    </interactant>
    <interactant intactId="EBI-544544">
        <id>P60785</id>
        <label>lepA</label>
    </interactant>
    <organismsDiffer>false</organismsDiffer>
    <experiments>4</experiments>
</comment>
<comment type="subcellular location">
    <subcellularLocation>
        <location evidence="1 2 3">Cell inner membrane</location>
        <topology evidence="1 3">Multi-pass membrane protein</topology>
    </subcellularLocation>
</comment>
<comment type="miscellaneous">
    <text evidence="3">Uses a transport mechanism that does not resemble the one proposed for homologous CorA channels.</text>
</comment>
<comment type="similarity">
    <text evidence="1 5">Belongs to the CorA metal ion transporter (MIT) (TC 1.A.35) family.</text>
</comment>
<proteinExistence type="evidence at protein level"/>
<feature type="chain" id="PRO_0000201315" description="Zinc transport protein ZntB">
    <location>
        <begin position="1"/>
        <end position="327"/>
    </location>
</feature>
<feature type="topological domain" description="Cytoplasmic" evidence="3 7">
    <location>
        <begin position="1"/>
        <end position="272"/>
    </location>
</feature>
<feature type="transmembrane region" description="Helical" evidence="3 7">
    <location>
        <begin position="273"/>
        <end position="288"/>
    </location>
</feature>
<feature type="topological domain" description="Periplasmic" evidence="3 7">
    <location>
        <begin position="289"/>
        <end position="302"/>
    </location>
</feature>
<feature type="transmembrane region" description="Helical" evidence="3 7">
    <location>
        <begin position="303"/>
        <end position="320"/>
    </location>
</feature>
<feature type="topological domain" description="Cytoplasmic" evidence="2 3 7">
    <location>
        <begin position="321"/>
        <end position="327"/>
    </location>
</feature>
<protein>
    <recommendedName>
        <fullName evidence="1 5">Zinc transport protein ZntB</fullName>
    </recommendedName>
</protein>
<dbReference type="EMBL" id="U00096">
    <property type="protein sequence ID" value="AAC74424.1"/>
    <property type="molecule type" value="Genomic_DNA"/>
</dbReference>
<dbReference type="EMBL" id="AP009048">
    <property type="protein sequence ID" value="BAE76406.1"/>
    <property type="molecule type" value="Genomic_DNA"/>
</dbReference>
<dbReference type="PIR" id="A64884">
    <property type="entry name" value="A64884"/>
</dbReference>
<dbReference type="RefSeq" id="NP_415858.1">
    <property type="nucleotide sequence ID" value="NC_000913.3"/>
</dbReference>
<dbReference type="RefSeq" id="WP_000387388.1">
    <property type="nucleotide sequence ID" value="NZ_SSZK01000012.1"/>
</dbReference>
<dbReference type="PDB" id="5N9Y">
    <property type="method" value="EM"/>
    <property type="resolution" value="4.20 A"/>
    <property type="chains" value="A/B/C/D/E=1-327"/>
</dbReference>
<dbReference type="PDBsum" id="5N9Y"/>
<dbReference type="EMDB" id="EMD-3605"/>
<dbReference type="SMR" id="P64423"/>
<dbReference type="BioGRID" id="4261064">
    <property type="interactions" value="18"/>
</dbReference>
<dbReference type="BioGRID" id="850275">
    <property type="interactions" value="2"/>
</dbReference>
<dbReference type="DIP" id="DIP-48038N"/>
<dbReference type="FunCoup" id="P64423">
    <property type="interactions" value="407"/>
</dbReference>
<dbReference type="IntAct" id="P64423">
    <property type="interactions" value="1"/>
</dbReference>
<dbReference type="STRING" id="511145.b1342"/>
<dbReference type="jPOST" id="P64423"/>
<dbReference type="PaxDb" id="511145-b1342"/>
<dbReference type="EnsemblBacteria" id="AAC74424">
    <property type="protein sequence ID" value="AAC74424"/>
    <property type="gene ID" value="b1342"/>
</dbReference>
<dbReference type="GeneID" id="93775479"/>
<dbReference type="GeneID" id="945910"/>
<dbReference type="KEGG" id="ecj:JW1336"/>
<dbReference type="KEGG" id="eco:b1342"/>
<dbReference type="KEGG" id="ecoc:C3026_07860"/>
<dbReference type="PATRIC" id="fig|1411691.4.peg.935"/>
<dbReference type="EchoBASE" id="EB3139"/>
<dbReference type="eggNOG" id="COG0598">
    <property type="taxonomic scope" value="Bacteria"/>
</dbReference>
<dbReference type="HOGENOM" id="CLU_007127_2_0_6"/>
<dbReference type="InParanoid" id="P64423"/>
<dbReference type="OMA" id="MVSVRIF"/>
<dbReference type="OrthoDB" id="9803484at2"/>
<dbReference type="PhylomeDB" id="P64423"/>
<dbReference type="BioCyc" id="EcoCyc:G6674-MONOMER"/>
<dbReference type="BioCyc" id="MetaCyc:G6674-MONOMER"/>
<dbReference type="PRO" id="PR:P64423"/>
<dbReference type="Proteomes" id="UP000000625">
    <property type="component" value="Chromosome"/>
</dbReference>
<dbReference type="GO" id="GO:0005886">
    <property type="term" value="C:plasma membrane"/>
    <property type="evidence" value="ECO:0000314"/>
    <property type="project" value="EcoCyc"/>
</dbReference>
<dbReference type="GO" id="GO:0050897">
    <property type="term" value="F:cobalt ion binding"/>
    <property type="evidence" value="ECO:0000318"/>
    <property type="project" value="GO_Central"/>
</dbReference>
<dbReference type="GO" id="GO:0015087">
    <property type="term" value="F:cobalt ion transmembrane transporter activity"/>
    <property type="evidence" value="ECO:0000318"/>
    <property type="project" value="GO_Central"/>
</dbReference>
<dbReference type="GO" id="GO:0000287">
    <property type="term" value="F:magnesium ion binding"/>
    <property type="evidence" value="ECO:0000318"/>
    <property type="project" value="GO_Central"/>
</dbReference>
<dbReference type="GO" id="GO:0015095">
    <property type="term" value="F:magnesium ion transmembrane transporter activity"/>
    <property type="evidence" value="ECO:0000318"/>
    <property type="project" value="GO_Central"/>
</dbReference>
<dbReference type="GO" id="GO:0015295">
    <property type="term" value="F:solute:proton symporter activity"/>
    <property type="evidence" value="ECO:0000314"/>
    <property type="project" value="EcoCyc"/>
</dbReference>
<dbReference type="GO" id="GO:0022883">
    <property type="term" value="F:zinc efflux transmembrane transporter activity"/>
    <property type="evidence" value="ECO:0000314"/>
    <property type="project" value="EcoCyc"/>
</dbReference>
<dbReference type="GO" id="GO:0005385">
    <property type="term" value="F:zinc ion transmembrane transporter activity"/>
    <property type="evidence" value="ECO:0000314"/>
    <property type="project" value="EcoCyc"/>
</dbReference>
<dbReference type="GO" id="GO:0071578">
    <property type="term" value="P:zinc ion import across plasma membrane"/>
    <property type="evidence" value="ECO:0000314"/>
    <property type="project" value="EcoCyc"/>
</dbReference>
<dbReference type="GO" id="GO:0071577">
    <property type="term" value="P:zinc ion transmembrane transport"/>
    <property type="evidence" value="ECO:0000314"/>
    <property type="project" value="EcoCyc"/>
</dbReference>
<dbReference type="CDD" id="cd12833">
    <property type="entry name" value="ZntB-like_1"/>
    <property type="match status" value="1"/>
</dbReference>
<dbReference type="FunFam" id="1.20.58.340:FF:000002">
    <property type="entry name" value="Zinc transport protein ZntB"/>
    <property type="match status" value="1"/>
</dbReference>
<dbReference type="FunFam" id="1.20.58.340:FF:000003">
    <property type="entry name" value="Zinc transport protein ZntB"/>
    <property type="match status" value="1"/>
</dbReference>
<dbReference type="FunFam" id="3.30.460.20:FF:000001">
    <property type="entry name" value="Zinc transport protein ZntB"/>
    <property type="match status" value="1"/>
</dbReference>
<dbReference type="Gene3D" id="3.30.460.20">
    <property type="entry name" value="CorA soluble domain-like"/>
    <property type="match status" value="1"/>
</dbReference>
<dbReference type="Gene3D" id="1.20.58.340">
    <property type="entry name" value="Magnesium transport protein CorA, transmembrane region"/>
    <property type="match status" value="2"/>
</dbReference>
<dbReference type="HAMAP" id="MF_01565">
    <property type="entry name" value="ZntB"/>
    <property type="match status" value="1"/>
</dbReference>
<dbReference type="InterPro" id="IPR045861">
    <property type="entry name" value="CorA_cytoplasmic_dom"/>
</dbReference>
<dbReference type="InterPro" id="IPR045863">
    <property type="entry name" value="CorA_TM1_TM2"/>
</dbReference>
<dbReference type="InterPro" id="IPR002523">
    <property type="entry name" value="MgTranspt_CorA/ZnTranspt_ZntB"/>
</dbReference>
<dbReference type="InterPro" id="IPR023714">
    <property type="entry name" value="Zn_transp_ZntB"/>
</dbReference>
<dbReference type="NCBIfam" id="NF007092">
    <property type="entry name" value="PRK09546.1"/>
    <property type="match status" value="1"/>
</dbReference>
<dbReference type="PANTHER" id="PTHR46494">
    <property type="entry name" value="CORA FAMILY METAL ION TRANSPORTER (EUROFUNG)"/>
    <property type="match status" value="1"/>
</dbReference>
<dbReference type="PANTHER" id="PTHR46494:SF3">
    <property type="entry name" value="ZINC TRANSPORT PROTEIN ZNTB"/>
    <property type="match status" value="1"/>
</dbReference>
<dbReference type="Pfam" id="PF01544">
    <property type="entry name" value="CorA"/>
    <property type="match status" value="1"/>
</dbReference>
<dbReference type="SUPFAM" id="SSF143865">
    <property type="entry name" value="CorA soluble domain-like"/>
    <property type="match status" value="1"/>
</dbReference>
<dbReference type="SUPFAM" id="SSF144083">
    <property type="entry name" value="Magnesium transport protein CorA, transmembrane region"/>
    <property type="match status" value="1"/>
</dbReference>